<proteinExistence type="evidence at transcript level"/>
<feature type="chain" id="PRO_0000244452" description="Probable cytosolic iron-sulfur protein assembly protein CIAO1">
    <location>
        <begin position="1"/>
        <end position="339"/>
    </location>
</feature>
<feature type="repeat" description="WD 1">
    <location>
        <begin position="14"/>
        <end position="53"/>
    </location>
</feature>
<feature type="repeat" description="WD 2">
    <location>
        <begin position="59"/>
        <end position="98"/>
    </location>
</feature>
<feature type="repeat" description="WD 3">
    <location>
        <begin position="103"/>
        <end position="142"/>
    </location>
</feature>
<feature type="repeat" description="WD 4">
    <location>
        <begin position="148"/>
        <end position="187"/>
    </location>
</feature>
<feature type="repeat" description="WD 5">
    <location>
        <begin position="192"/>
        <end position="231"/>
    </location>
</feature>
<feature type="repeat" description="WD 6">
    <location>
        <begin position="250"/>
        <end position="289"/>
    </location>
</feature>
<feature type="repeat" description="WD 7">
    <location>
        <begin position="301"/>
        <end position="339"/>
    </location>
</feature>
<feature type="short sequence motif" description="LYR motif; required for interaction with HSC20" evidence="1">
    <location>
        <begin position="176"/>
        <end position="178"/>
    </location>
</feature>
<name>CIAO1_BOVIN</name>
<evidence type="ECO:0000250" key="1">
    <source>
        <dbReference type="UniProtKB" id="O76071"/>
    </source>
</evidence>
<evidence type="ECO:0000255" key="2">
    <source>
        <dbReference type="HAMAP-Rule" id="MF_03037"/>
    </source>
</evidence>
<sequence>MKDSLVLLSRILAHPDSRCWFLAWNPAGTLLASCGGDRSVRIWGREGDSWICKSVLCEGHQRTVRKVAWSPCGNYLASASFDATTCIWKKNEDDFECVTTLEGHENEVKSVAWAPSGNLLATCSRDKSVWVWEVDEEDEYECVSVLNSHTQDVKHVVWHPSQELLASASYDDTVKLYREEEDDWVCCATLEGHESTVWSLAFDPSGQRLASCSDDRTVRIWRQYLPGNEQGVACSGSEASWKCVCTLSGFHSRTIYDVAWCQLTGTLATACGDDAIRVFEEDPGSDPQQPTFSLTAHVPQAHSQDVNCVAWNPKERGLLASCSDDGELAFWKYQPSEGI</sequence>
<gene>
    <name evidence="2" type="primary">CIAO1</name>
    <name type="synonym">WDR39</name>
</gene>
<dbReference type="EMBL" id="BC108091">
    <property type="protein sequence ID" value="AAI08092.1"/>
    <property type="molecule type" value="mRNA"/>
</dbReference>
<dbReference type="RefSeq" id="NP_001032559.1">
    <property type="nucleotide sequence ID" value="NM_001037482.2"/>
</dbReference>
<dbReference type="SMR" id="Q32PJ6"/>
<dbReference type="FunCoup" id="Q32PJ6">
    <property type="interactions" value="4656"/>
</dbReference>
<dbReference type="STRING" id="9913.ENSBTAP00000020797"/>
<dbReference type="PaxDb" id="9913-ENSBTAP00000020797"/>
<dbReference type="Ensembl" id="ENSBTAT00000020797.3">
    <property type="protein sequence ID" value="ENSBTAP00000020797.2"/>
    <property type="gene ID" value="ENSBTAG00000015659.3"/>
</dbReference>
<dbReference type="GeneID" id="540069"/>
<dbReference type="KEGG" id="bta:540069"/>
<dbReference type="CTD" id="9391"/>
<dbReference type="VEuPathDB" id="HostDB:ENSBTAG00000015659"/>
<dbReference type="VGNC" id="VGNC:27356">
    <property type="gene designation" value="CIAO1"/>
</dbReference>
<dbReference type="eggNOG" id="KOG0645">
    <property type="taxonomic scope" value="Eukaryota"/>
</dbReference>
<dbReference type="GeneTree" id="ENSGT00940000158670"/>
<dbReference type="HOGENOM" id="CLU_000288_57_8_1"/>
<dbReference type="InParanoid" id="Q32PJ6"/>
<dbReference type="OMA" id="IREIRWS"/>
<dbReference type="OrthoDB" id="284782at2759"/>
<dbReference type="TreeFam" id="TF318181"/>
<dbReference type="Proteomes" id="UP000009136">
    <property type="component" value="Chromosome 11"/>
</dbReference>
<dbReference type="Bgee" id="ENSBTAG00000015659">
    <property type="expression patterns" value="Expressed in metanephros cortex and 102 other cell types or tissues"/>
</dbReference>
<dbReference type="GO" id="GO:0005737">
    <property type="term" value="C:cytoplasm"/>
    <property type="evidence" value="ECO:0000250"/>
    <property type="project" value="UniProtKB"/>
</dbReference>
<dbReference type="GO" id="GO:0097361">
    <property type="term" value="C:cytosolic [4Fe-4S] assembly targeting complex"/>
    <property type="evidence" value="ECO:0000250"/>
    <property type="project" value="UniProtKB"/>
</dbReference>
<dbReference type="GO" id="GO:0071817">
    <property type="term" value="C:MMXD complex"/>
    <property type="evidence" value="ECO:0000250"/>
    <property type="project" value="UniProtKB"/>
</dbReference>
<dbReference type="GO" id="GO:0007059">
    <property type="term" value="P:chromosome segregation"/>
    <property type="evidence" value="ECO:0007669"/>
    <property type="project" value="UniProtKB-KW"/>
</dbReference>
<dbReference type="GO" id="GO:0016226">
    <property type="term" value="P:iron-sulfur cluster assembly"/>
    <property type="evidence" value="ECO:0000318"/>
    <property type="project" value="GO_Central"/>
</dbReference>
<dbReference type="GO" id="GO:0051604">
    <property type="term" value="P:protein maturation"/>
    <property type="evidence" value="ECO:0000250"/>
    <property type="project" value="UniProtKB"/>
</dbReference>
<dbReference type="CDD" id="cd00200">
    <property type="entry name" value="WD40"/>
    <property type="match status" value="1"/>
</dbReference>
<dbReference type="FunFam" id="2.130.10.10:FF:000136">
    <property type="entry name" value="Probable cytosolic iron-sulfur protein assembly protein CIAO1"/>
    <property type="match status" value="1"/>
</dbReference>
<dbReference type="Gene3D" id="2.130.10.10">
    <property type="entry name" value="YVTN repeat-like/Quinoprotein amine dehydrogenase"/>
    <property type="match status" value="1"/>
</dbReference>
<dbReference type="HAMAP" id="MF_03037">
    <property type="entry name" value="ciao1"/>
    <property type="match status" value="1"/>
</dbReference>
<dbReference type="InterPro" id="IPR028608">
    <property type="entry name" value="CIAO1/Cia1"/>
</dbReference>
<dbReference type="InterPro" id="IPR015943">
    <property type="entry name" value="WD40/YVTN_repeat-like_dom_sf"/>
</dbReference>
<dbReference type="InterPro" id="IPR019775">
    <property type="entry name" value="WD40_repeat_CS"/>
</dbReference>
<dbReference type="InterPro" id="IPR036322">
    <property type="entry name" value="WD40_repeat_dom_sf"/>
</dbReference>
<dbReference type="InterPro" id="IPR001680">
    <property type="entry name" value="WD40_rpt"/>
</dbReference>
<dbReference type="PANTHER" id="PTHR19920:SF0">
    <property type="entry name" value="CYTOSOLIC IRON-SULFUR PROTEIN ASSEMBLY PROTEIN CIAO1-RELATED"/>
    <property type="match status" value="1"/>
</dbReference>
<dbReference type="PANTHER" id="PTHR19920">
    <property type="entry name" value="WD40 PROTEIN CIAO1"/>
    <property type="match status" value="1"/>
</dbReference>
<dbReference type="Pfam" id="PF00400">
    <property type="entry name" value="WD40"/>
    <property type="match status" value="7"/>
</dbReference>
<dbReference type="SMART" id="SM00320">
    <property type="entry name" value="WD40"/>
    <property type="match status" value="7"/>
</dbReference>
<dbReference type="SUPFAM" id="SSF50978">
    <property type="entry name" value="WD40 repeat-like"/>
    <property type="match status" value="1"/>
</dbReference>
<dbReference type="PROSITE" id="PS00678">
    <property type="entry name" value="WD_REPEATS_1"/>
    <property type="match status" value="1"/>
</dbReference>
<dbReference type="PROSITE" id="PS50082">
    <property type="entry name" value="WD_REPEATS_2"/>
    <property type="match status" value="6"/>
</dbReference>
<dbReference type="PROSITE" id="PS50294">
    <property type="entry name" value="WD_REPEATS_REGION"/>
    <property type="match status" value="1"/>
</dbReference>
<comment type="function">
    <text evidence="1 2">Key component of the cytosolic iron-sulfur protein assembly (CIA) complex, a multiprotein complex that mediates the incorporation of iron-sulfur cluster into extramitochondrial Fe/S proteins (By similarity). As a CIA complex component, interacts specifically with CIAO2A or CIAO2B and MMS19 to assist different branches of iron-sulfur protein assembly, depending of its interactors. The complex CIAO1:CIAO2B:MMS19 binds to and facilitates the assembly of most cytosolic-nuclear Fe/S proteins. CIAO1:CIAO2A specifically matures ACO1 and stabilizes IREB2 (By similarity). Seems to specifically modulate the transactivation activity of WT1. As part of the mitotic spindle-associated MMXD complex it may play a role in chromosome segregation (By similarity).</text>
</comment>
<comment type="subunit">
    <text evidence="1 2">Component of the CIA complex. Interacts with CIAO2A and forms a complex with CIAO2B and MMS19; the interactions with CIAO2A and CIAO2B are mutually exclusive. Interacts with CHD1L, ERCC2, IREB2 and POLD1. Component of the MMXD complex, which includes CIAO1, ERCC2, CIAO2B, MMS19 and SLC25A5. Interacts with WT1. Interacts with CIAO3. Interacts (via LYR motif) with HSC20.</text>
</comment>
<comment type="subcellular location">
    <subcellularLocation>
        <location evidence="1">Cytoplasm</location>
    </subcellularLocation>
</comment>
<comment type="similarity">
    <text evidence="2">Belongs to the WD repeat CIA1 family.</text>
</comment>
<protein>
    <recommendedName>
        <fullName evidence="2">Probable cytosolic iron-sulfur protein assembly protein CIAO1</fullName>
    </recommendedName>
    <alternativeName>
        <fullName evidence="2">WD repeat-containing protein 39</fullName>
    </alternativeName>
</protein>
<accession>Q32PJ6</accession>
<keyword id="KW-0159">Chromosome partition</keyword>
<keyword id="KW-0963">Cytoplasm</keyword>
<keyword id="KW-1185">Reference proteome</keyword>
<keyword id="KW-0677">Repeat</keyword>
<keyword id="KW-0853">WD repeat</keyword>
<organism>
    <name type="scientific">Bos taurus</name>
    <name type="common">Bovine</name>
    <dbReference type="NCBI Taxonomy" id="9913"/>
    <lineage>
        <taxon>Eukaryota</taxon>
        <taxon>Metazoa</taxon>
        <taxon>Chordata</taxon>
        <taxon>Craniata</taxon>
        <taxon>Vertebrata</taxon>
        <taxon>Euteleostomi</taxon>
        <taxon>Mammalia</taxon>
        <taxon>Eutheria</taxon>
        <taxon>Laurasiatheria</taxon>
        <taxon>Artiodactyla</taxon>
        <taxon>Ruminantia</taxon>
        <taxon>Pecora</taxon>
        <taxon>Bovidae</taxon>
        <taxon>Bovinae</taxon>
        <taxon>Bos</taxon>
    </lineage>
</organism>
<reference key="1">
    <citation type="submission" date="2005-10" db="EMBL/GenBank/DDBJ databases">
        <authorList>
            <consortium name="NIH - Mammalian Gene Collection (MGC) project"/>
        </authorList>
    </citation>
    <scope>NUCLEOTIDE SEQUENCE [LARGE SCALE MRNA]</scope>
    <source>
        <strain>Crossbred X Angus</strain>
        <tissue>Ileum</tissue>
    </source>
</reference>